<gene>
    <name evidence="1" type="primary">valS</name>
    <name type="ordered locus">Noc_1091</name>
</gene>
<evidence type="ECO:0000255" key="1">
    <source>
        <dbReference type="HAMAP-Rule" id="MF_02004"/>
    </source>
</evidence>
<keyword id="KW-0030">Aminoacyl-tRNA synthetase</keyword>
<keyword id="KW-0067">ATP-binding</keyword>
<keyword id="KW-0175">Coiled coil</keyword>
<keyword id="KW-0963">Cytoplasm</keyword>
<keyword id="KW-0436">Ligase</keyword>
<keyword id="KW-0547">Nucleotide-binding</keyword>
<keyword id="KW-0648">Protein biosynthesis</keyword>
<keyword id="KW-1185">Reference proteome</keyword>
<organism>
    <name type="scientific">Nitrosococcus oceani (strain ATCC 19707 / BCRC 17464 / JCM 30415 / NCIMB 11848 / C-107)</name>
    <dbReference type="NCBI Taxonomy" id="323261"/>
    <lineage>
        <taxon>Bacteria</taxon>
        <taxon>Pseudomonadati</taxon>
        <taxon>Pseudomonadota</taxon>
        <taxon>Gammaproteobacteria</taxon>
        <taxon>Chromatiales</taxon>
        <taxon>Chromatiaceae</taxon>
        <taxon>Nitrosococcus</taxon>
    </lineage>
</organism>
<name>SYV_NITOC</name>
<proteinExistence type="inferred from homology"/>
<reference key="1">
    <citation type="journal article" date="2006" name="Appl. Environ. Microbiol.">
        <title>Complete genome sequence of the marine, chemolithoautotrophic, ammonia-oxidizing bacterium Nitrosococcus oceani ATCC 19707.</title>
        <authorList>
            <person name="Klotz M.G."/>
            <person name="Arp D.J."/>
            <person name="Chain P.S.G."/>
            <person name="El-Sheikh A.F."/>
            <person name="Hauser L.J."/>
            <person name="Hommes N.G."/>
            <person name="Larimer F.W."/>
            <person name="Malfatti S.A."/>
            <person name="Norton J.M."/>
            <person name="Poret-Peterson A.T."/>
            <person name="Vergez L.M."/>
            <person name="Ward B.B."/>
        </authorList>
    </citation>
    <scope>NUCLEOTIDE SEQUENCE [LARGE SCALE GENOMIC DNA]</scope>
    <source>
        <strain>ATCC 19707 / BCRC 17464 / JCM 30415 / NCIMB 11848 / C-107</strain>
    </source>
</reference>
<accession>Q3JC50</accession>
<comment type="function">
    <text evidence="1">Catalyzes the attachment of valine to tRNA(Val). As ValRS can inadvertently accommodate and process structurally similar amino acids such as threonine, to avoid such errors, it has a 'posttransfer' editing activity that hydrolyzes mischarged Thr-tRNA(Val) in a tRNA-dependent manner.</text>
</comment>
<comment type="catalytic activity">
    <reaction evidence="1">
        <text>tRNA(Val) + L-valine + ATP = L-valyl-tRNA(Val) + AMP + diphosphate</text>
        <dbReference type="Rhea" id="RHEA:10704"/>
        <dbReference type="Rhea" id="RHEA-COMP:9672"/>
        <dbReference type="Rhea" id="RHEA-COMP:9708"/>
        <dbReference type="ChEBI" id="CHEBI:30616"/>
        <dbReference type="ChEBI" id="CHEBI:33019"/>
        <dbReference type="ChEBI" id="CHEBI:57762"/>
        <dbReference type="ChEBI" id="CHEBI:78442"/>
        <dbReference type="ChEBI" id="CHEBI:78537"/>
        <dbReference type="ChEBI" id="CHEBI:456215"/>
        <dbReference type="EC" id="6.1.1.9"/>
    </reaction>
</comment>
<comment type="subunit">
    <text evidence="1">Monomer.</text>
</comment>
<comment type="subcellular location">
    <subcellularLocation>
        <location evidence="1">Cytoplasm</location>
    </subcellularLocation>
</comment>
<comment type="domain">
    <text evidence="1">ValRS has two distinct active sites: one for aminoacylation and one for editing. The misactivated threonine is translocated from the active site to the editing site.</text>
</comment>
<comment type="domain">
    <text evidence="1">The C-terminal coiled-coil domain is crucial for aminoacylation activity.</text>
</comment>
<comment type="similarity">
    <text evidence="1">Belongs to the class-I aminoacyl-tRNA synthetase family. ValS type 1 subfamily.</text>
</comment>
<dbReference type="EC" id="6.1.1.9" evidence="1"/>
<dbReference type="EMBL" id="CP000127">
    <property type="protein sequence ID" value="ABA57596.1"/>
    <property type="molecule type" value="Genomic_DNA"/>
</dbReference>
<dbReference type="RefSeq" id="WP_002809071.1">
    <property type="nucleotide sequence ID" value="NC_007484.1"/>
</dbReference>
<dbReference type="SMR" id="Q3JC50"/>
<dbReference type="FunCoup" id="Q3JC50">
    <property type="interactions" value="543"/>
</dbReference>
<dbReference type="STRING" id="323261.Noc_1091"/>
<dbReference type="KEGG" id="noc:Noc_1091"/>
<dbReference type="eggNOG" id="COG0525">
    <property type="taxonomic scope" value="Bacteria"/>
</dbReference>
<dbReference type="HOGENOM" id="CLU_001493_0_2_6"/>
<dbReference type="InParanoid" id="Q3JC50"/>
<dbReference type="Proteomes" id="UP000006838">
    <property type="component" value="Chromosome"/>
</dbReference>
<dbReference type="GO" id="GO:0005829">
    <property type="term" value="C:cytosol"/>
    <property type="evidence" value="ECO:0007669"/>
    <property type="project" value="TreeGrafter"/>
</dbReference>
<dbReference type="GO" id="GO:0002161">
    <property type="term" value="F:aminoacyl-tRNA deacylase activity"/>
    <property type="evidence" value="ECO:0007669"/>
    <property type="project" value="InterPro"/>
</dbReference>
<dbReference type="GO" id="GO:0005524">
    <property type="term" value="F:ATP binding"/>
    <property type="evidence" value="ECO:0007669"/>
    <property type="project" value="UniProtKB-UniRule"/>
</dbReference>
<dbReference type="GO" id="GO:0004832">
    <property type="term" value="F:valine-tRNA ligase activity"/>
    <property type="evidence" value="ECO:0007669"/>
    <property type="project" value="UniProtKB-UniRule"/>
</dbReference>
<dbReference type="GO" id="GO:0006438">
    <property type="term" value="P:valyl-tRNA aminoacylation"/>
    <property type="evidence" value="ECO:0007669"/>
    <property type="project" value="UniProtKB-UniRule"/>
</dbReference>
<dbReference type="CDD" id="cd07962">
    <property type="entry name" value="Anticodon_Ia_Val"/>
    <property type="match status" value="1"/>
</dbReference>
<dbReference type="CDD" id="cd00817">
    <property type="entry name" value="ValRS_core"/>
    <property type="match status" value="1"/>
</dbReference>
<dbReference type="FunFam" id="1.10.287.380:FF:000001">
    <property type="entry name" value="Valine--tRNA ligase"/>
    <property type="match status" value="1"/>
</dbReference>
<dbReference type="FunFam" id="3.40.50.620:FF:000073">
    <property type="entry name" value="Valine--tRNA ligase"/>
    <property type="match status" value="1"/>
</dbReference>
<dbReference type="FunFam" id="1.10.730.10:FF:000009">
    <property type="entry name" value="Valine--tRNA ligase, mitochondrial"/>
    <property type="match status" value="1"/>
</dbReference>
<dbReference type="FunFam" id="3.40.50.620:FF:000020">
    <property type="entry name" value="Valine--tRNA ligase, mitochondrial"/>
    <property type="match status" value="1"/>
</dbReference>
<dbReference type="FunFam" id="3.90.740.10:FF:000005">
    <property type="entry name" value="Valine--tRNA ligase, mitochondrial"/>
    <property type="match status" value="1"/>
</dbReference>
<dbReference type="Gene3D" id="3.40.50.620">
    <property type="entry name" value="HUPs"/>
    <property type="match status" value="2"/>
</dbReference>
<dbReference type="Gene3D" id="1.10.730.10">
    <property type="entry name" value="Isoleucyl-tRNA Synthetase, Domain 1"/>
    <property type="match status" value="1"/>
</dbReference>
<dbReference type="Gene3D" id="1.10.287.380">
    <property type="entry name" value="Valyl-tRNA synthetase, C-terminal domain"/>
    <property type="match status" value="1"/>
</dbReference>
<dbReference type="Gene3D" id="3.90.740.10">
    <property type="entry name" value="Valyl/Leucyl/Isoleucyl-tRNA synthetase, editing domain"/>
    <property type="match status" value="1"/>
</dbReference>
<dbReference type="HAMAP" id="MF_02004">
    <property type="entry name" value="Val_tRNA_synth_type1"/>
    <property type="match status" value="1"/>
</dbReference>
<dbReference type="InterPro" id="IPR001412">
    <property type="entry name" value="aa-tRNA-synth_I_CS"/>
</dbReference>
<dbReference type="InterPro" id="IPR002300">
    <property type="entry name" value="aa-tRNA-synth_Ia"/>
</dbReference>
<dbReference type="InterPro" id="IPR033705">
    <property type="entry name" value="Anticodon_Ia_Val"/>
</dbReference>
<dbReference type="InterPro" id="IPR013155">
    <property type="entry name" value="M/V/L/I-tRNA-synth_anticd-bd"/>
</dbReference>
<dbReference type="InterPro" id="IPR014729">
    <property type="entry name" value="Rossmann-like_a/b/a_fold"/>
</dbReference>
<dbReference type="InterPro" id="IPR010978">
    <property type="entry name" value="tRNA-bd_arm"/>
</dbReference>
<dbReference type="InterPro" id="IPR009080">
    <property type="entry name" value="tRNAsynth_Ia_anticodon-bd"/>
</dbReference>
<dbReference type="InterPro" id="IPR037118">
    <property type="entry name" value="Val-tRNA_synth_C_sf"/>
</dbReference>
<dbReference type="InterPro" id="IPR019499">
    <property type="entry name" value="Val-tRNA_synth_tRNA-bd"/>
</dbReference>
<dbReference type="InterPro" id="IPR009008">
    <property type="entry name" value="Val/Leu/Ile-tRNA-synth_edit"/>
</dbReference>
<dbReference type="InterPro" id="IPR002303">
    <property type="entry name" value="Valyl-tRNA_ligase"/>
</dbReference>
<dbReference type="NCBIfam" id="NF004349">
    <property type="entry name" value="PRK05729.1"/>
    <property type="match status" value="1"/>
</dbReference>
<dbReference type="NCBIfam" id="TIGR00422">
    <property type="entry name" value="valS"/>
    <property type="match status" value="1"/>
</dbReference>
<dbReference type="PANTHER" id="PTHR11946:SF93">
    <property type="entry name" value="VALINE--TRNA LIGASE, CHLOROPLASTIC_MITOCHONDRIAL 2"/>
    <property type="match status" value="1"/>
</dbReference>
<dbReference type="PANTHER" id="PTHR11946">
    <property type="entry name" value="VALYL-TRNA SYNTHETASES"/>
    <property type="match status" value="1"/>
</dbReference>
<dbReference type="Pfam" id="PF08264">
    <property type="entry name" value="Anticodon_1"/>
    <property type="match status" value="1"/>
</dbReference>
<dbReference type="Pfam" id="PF00133">
    <property type="entry name" value="tRNA-synt_1"/>
    <property type="match status" value="1"/>
</dbReference>
<dbReference type="Pfam" id="PF10458">
    <property type="entry name" value="Val_tRNA-synt_C"/>
    <property type="match status" value="1"/>
</dbReference>
<dbReference type="PRINTS" id="PR00986">
    <property type="entry name" value="TRNASYNTHVAL"/>
</dbReference>
<dbReference type="SUPFAM" id="SSF47323">
    <property type="entry name" value="Anticodon-binding domain of a subclass of class I aminoacyl-tRNA synthetases"/>
    <property type="match status" value="1"/>
</dbReference>
<dbReference type="SUPFAM" id="SSF52374">
    <property type="entry name" value="Nucleotidylyl transferase"/>
    <property type="match status" value="1"/>
</dbReference>
<dbReference type="SUPFAM" id="SSF46589">
    <property type="entry name" value="tRNA-binding arm"/>
    <property type="match status" value="1"/>
</dbReference>
<dbReference type="SUPFAM" id="SSF50677">
    <property type="entry name" value="ValRS/IleRS/LeuRS editing domain"/>
    <property type="match status" value="1"/>
</dbReference>
<dbReference type="PROSITE" id="PS00178">
    <property type="entry name" value="AA_TRNA_LIGASE_I"/>
    <property type="match status" value="1"/>
</dbReference>
<sequence length="929" mass="106475">MDKNYNPQAIEQYWYQIWEQKGYFTPQGKDSSYCIMIPPPNVTGHLHMGHAFQSTIMDALIRYHRMRGDDTLWQVGADHAGIATQMVVENQLNAEGKTRHDLGREAFIQRVWEWKEHSGGTITRQLRRMGTSVDWSRERFTMDEGLSQAVGEVFVRLYDEGLLYRGKRLVNWDSVLHTAISDLEVISEEENSHLWHMRYPLSDGSGHLVVATTRPETMLGDTAVAVHPEDPRYQHLIGKTVALPLTDRTIPVIADDYVEPEFGSGCVKITPAHDFNDYEVGQRHGLPFINIFTVDASLNENVPERYRNLDRFEARKLVVADLEAAGLLEKIEDHKLMVPRGDRSRTVIEPYLTDQWFVKTAPLAEPAIQAVENGQIRFIPENWNKIYFEWMRNIQDWCISRQIWWGHRIPAWYDPEGKIYVAPTETQARQKYNLPPDLPLEQDPDVLDTWFSSALWPFSTLGWPEDTSLLRAFYPTSVLVTGFDIIFFWVARMIMMGLKFTGEVPFHEVYIHGLVRDAEGQKMSKSKGNVLDPLDLIDGIDLETLVTKRTGGLMQPAMAKRIEKATRKEFPQGIPSFGCDALRFTFAILATRGRDIRFDLGRIEGYRNFCNKLWNAARYVLINVSSEISVERQGKPEQAEENLMLGAPERWIISRFHSTTQEVIEGIENYRFDRVAQAIYNFTWNEYCDWYLELSKPVLNNPASPEAAKRRTRHTLVHVLEALLRLAHPIIPFITEEIWQQVGPLAGRQGKTIMLQPYPQPEIDKIDEDAVAEIEWVIAFVTGVRSIRSQMNIAPGKPIPLLLQAGKAHDRTRLESNQKFLAALAKLDSIQWLKDETPPPAATALVDELKLLIPLAGLIDKEAELKRLDREMQRMRKDLARVQGKLANSNYVERAPAEIVAKERQRAQEVTAALSTLEQQHAEITDLNP</sequence>
<feature type="chain" id="PRO_0000224518" description="Valine--tRNA ligase">
    <location>
        <begin position="1"/>
        <end position="929"/>
    </location>
</feature>
<feature type="coiled-coil region" evidence="1">
    <location>
        <begin position="855"/>
        <end position="926"/>
    </location>
</feature>
<feature type="short sequence motif" description="'HIGH' region">
    <location>
        <begin position="40"/>
        <end position="50"/>
    </location>
</feature>
<feature type="short sequence motif" description="'KMSKS' region">
    <location>
        <begin position="522"/>
        <end position="526"/>
    </location>
</feature>
<feature type="binding site" evidence="1">
    <location>
        <position position="525"/>
    </location>
    <ligand>
        <name>ATP</name>
        <dbReference type="ChEBI" id="CHEBI:30616"/>
    </ligand>
</feature>
<protein>
    <recommendedName>
        <fullName evidence="1">Valine--tRNA ligase</fullName>
        <ecNumber evidence="1">6.1.1.9</ecNumber>
    </recommendedName>
    <alternativeName>
        <fullName evidence="1">Valyl-tRNA synthetase</fullName>
        <shortName evidence="1">ValRS</shortName>
    </alternativeName>
</protein>